<comment type="similarity">
    <text evidence="2">Belongs to the D-glutamate cyclase family.</text>
</comment>
<gene>
    <name type="ORF">SPAC5H10.01</name>
</gene>
<proteinExistence type="inferred from homology"/>
<name>YA01_SCHPO</name>
<protein>
    <recommendedName>
        <fullName>Putative hydro-lyase C5H10.01</fullName>
        <ecNumber evidence="1">4.2.1.-</ecNumber>
    </recommendedName>
</protein>
<dbReference type="EC" id="4.2.1.-" evidence="1"/>
<dbReference type="EMBL" id="CU329670">
    <property type="protein sequence ID" value="CAA89951.1"/>
    <property type="molecule type" value="Genomic_DNA"/>
</dbReference>
<dbReference type="PIR" id="T38965">
    <property type="entry name" value="S55479"/>
</dbReference>
<dbReference type="SMR" id="Q09674"/>
<dbReference type="BioGRID" id="278321">
    <property type="interactions" value="13"/>
</dbReference>
<dbReference type="STRING" id="284812.Q09674"/>
<dbReference type="PaxDb" id="4896-SPAC5H10.01.1"/>
<dbReference type="EnsemblFungi" id="SPAC5H10.01.1">
    <property type="protein sequence ID" value="SPAC5H10.01.1:pep"/>
    <property type="gene ID" value="SPAC5H10.01"/>
</dbReference>
<dbReference type="KEGG" id="spo:2541830"/>
<dbReference type="PomBase" id="SPAC5H10.01"/>
<dbReference type="VEuPathDB" id="FungiDB:SPAC5H10.01"/>
<dbReference type="eggNOG" id="ENOG502QV7A">
    <property type="taxonomic scope" value="Eukaryota"/>
</dbReference>
<dbReference type="HOGENOM" id="CLU_059759_1_0_1"/>
<dbReference type="InParanoid" id="Q09674"/>
<dbReference type="OMA" id="NVPMYKT"/>
<dbReference type="PhylomeDB" id="Q09674"/>
<dbReference type="PRO" id="PR:Q09674"/>
<dbReference type="Proteomes" id="UP000002485">
    <property type="component" value="Chromosome I"/>
</dbReference>
<dbReference type="GO" id="GO:0005829">
    <property type="term" value="C:cytosol"/>
    <property type="evidence" value="ECO:0007005"/>
    <property type="project" value="PomBase"/>
</dbReference>
<dbReference type="GO" id="GO:0005739">
    <property type="term" value="C:mitochondrion"/>
    <property type="evidence" value="ECO:0000250"/>
    <property type="project" value="PomBase"/>
</dbReference>
<dbReference type="GO" id="GO:0005634">
    <property type="term" value="C:nucleus"/>
    <property type="evidence" value="ECO:0007005"/>
    <property type="project" value="PomBase"/>
</dbReference>
<dbReference type="GO" id="GO:0047820">
    <property type="term" value="F:D-glutamate cyclase activity"/>
    <property type="evidence" value="ECO:0000318"/>
    <property type="project" value="GO_Central"/>
</dbReference>
<dbReference type="GO" id="GO:0006536">
    <property type="term" value="P:glutamate metabolic process"/>
    <property type="evidence" value="ECO:0000318"/>
    <property type="project" value="GO_Central"/>
</dbReference>
<dbReference type="FunFam" id="3.30.2040.10:FF:000001">
    <property type="entry name" value="D-glutamate cyclase, mitochondrial"/>
    <property type="match status" value="1"/>
</dbReference>
<dbReference type="Gene3D" id="3.40.1640.10">
    <property type="entry name" value="PSTPO5379-like"/>
    <property type="match status" value="1"/>
</dbReference>
<dbReference type="Gene3D" id="3.30.2040.10">
    <property type="entry name" value="PSTPO5379-like domain"/>
    <property type="match status" value="1"/>
</dbReference>
<dbReference type="InterPro" id="IPR009906">
    <property type="entry name" value="D-Glu_cyclase"/>
</dbReference>
<dbReference type="InterPro" id="IPR038021">
    <property type="entry name" value="Putative_hydro-lyase"/>
</dbReference>
<dbReference type="InterPro" id="IPR016938">
    <property type="entry name" value="UPF0317"/>
</dbReference>
<dbReference type="PANTHER" id="PTHR32022">
    <property type="entry name" value="D-GLUTAMATE CYCLASE, MITOCHONDRIAL"/>
    <property type="match status" value="1"/>
</dbReference>
<dbReference type="PANTHER" id="PTHR32022:SF10">
    <property type="entry name" value="D-GLUTAMATE CYCLASE, MITOCHONDRIAL"/>
    <property type="match status" value="1"/>
</dbReference>
<dbReference type="Pfam" id="PF07286">
    <property type="entry name" value="D-Glu_cyclase"/>
    <property type="match status" value="1"/>
</dbReference>
<dbReference type="PIRSF" id="PIRSF029755">
    <property type="entry name" value="UCP029755"/>
    <property type="match status" value="1"/>
</dbReference>
<dbReference type="SUPFAM" id="SSF160920">
    <property type="entry name" value="PSTPO5379-like"/>
    <property type="match status" value="1"/>
</dbReference>
<accession>Q09674</accession>
<reference key="1">
    <citation type="journal article" date="2002" name="Nature">
        <title>The genome sequence of Schizosaccharomyces pombe.</title>
        <authorList>
            <person name="Wood V."/>
            <person name="Gwilliam R."/>
            <person name="Rajandream M.A."/>
            <person name="Lyne M.H."/>
            <person name="Lyne R."/>
            <person name="Stewart A."/>
            <person name="Sgouros J.G."/>
            <person name="Peat N."/>
            <person name="Hayles J."/>
            <person name="Baker S.G."/>
            <person name="Basham D."/>
            <person name="Bowman S."/>
            <person name="Brooks K."/>
            <person name="Brown D."/>
            <person name="Brown S."/>
            <person name="Chillingworth T."/>
            <person name="Churcher C.M."/>
            <person name="Collins M."/>
            <person name="Connor R."/>
            <person name="Cronin A."/>
            <person name="Davis P."/>
            <person name="Feltwell T."/>
            <person name="Fraser A."/>
            <person name="Gentles S."/>
            <person name="Goble A."/>
            <person name="Hamlin N."/>
            <person name="Harris D.E."/>
            <person name="Hidalgo J."/>
            <person name="Hodgson G."/>
            <person name="Holroyd S."/>
            <person name="Hornsby T."/>
            <person name="Howarth S."/>
            <person name="Huckle E.J."/>
            <person name="Hunt S."/>
            <person name="Jagels K."/>
            <person name="James K.D."/>
            <person name="Jones L."/>
            <person name="Jones M."/>
            <person name="Leather S."/>
            <person name="McDonald S."/>
            <person name="McLean J."/>
            <person name="Mooney P."/>
            <person name="Moule S."/>
            <person name="Mungall K.L."/>
            <person name="Murphy L.D."/>
            <person name="Niblett D."/>
            <person name="Odell C."/>
            <person name="Oliver K."/>
            <person name="O'Neil S."/>
            <person name="Pearson D."/>
            <person name="Quail M.A."/>
            <person name="Rabbinowitsch E."/>
            <person name="Rutherford K.M."/>
            <person name="Rutter S."/>
            <person name="Saunders D."/>
            <person name="Seeger K."/>
            <person name="Sharp S."/>
            <person name="Skelton J."/>
            <person name="Simmonds M.N."/>
            <person name="Squares R."/>
            <person name="Squares S."/>
            <person name="Stevens K."/>
            <person name="Taylor K."/>
            <person name="Taylor R.G."/>
            <person name="Tivey A."/>
            <person name="Walsh S.V."/>
            <person name="Warren T."/>
            <person name="Whitehead S."/>
            <person name="Woodward J.R."/>
            <person name="Volckaert G."/>
            <person name="Aert R."/>
            <person name="Robben J."/>
            <person name="Grymonprez B."/>
            <person name="Weltjens I."/>
            <person name="Vanstreels E."/>
            <person name="Rieger M."/>
            <person name="Schaefer M."/>
            <person name="Mueller-Auer S."/>
            <person name="Gabel C."/>
            <person name="Fuchs M."/>
            <person name="Duesterhoeft A."/>
            <person name="Fritzc C."/>
            <person name="Holzer E."/>
            <person name="Moestl D."/>
            <person name="Hilbert H."/>
            <person name="Borzym K."/>
            <person name="Langer I."/>
            <person name="Beck A."/>
            <person name="Lehrach H."/>
            <person name="Reinhardt R."/>
            <person name="Pohl T.M."/>
            <person name="Eger P."/>
            <person name="Zimmermann W."/>
            <person name="Wedler H."/>
            <person name="Wambutt R."/>
            <person name="Purnelle B."/>
            <person name="Goffeau A."/>
            <person name="Cadieu E."/>
            <person name="Dreano S."/>
            <person name="Gloux S."/>
            <person name="Lelaure V."/>
            <person name="Mottier S."/>
            <person name="Galibert F."/>
            <person name="Aves S.J."/>
            <person name="Xiang Z."/>
            <person name="Hunt C."/>
            <person name="Moore K."/>
            <person name="Hurst S.M."/>
            <person name="Lucas M."/>
            <person name="Rochet M."/>
            <person name="Gaillardin C."/>
            <person name="Tallada V.A."/>
            <person name="Garzon A."/>
            <person name="Thode G."/>
            <person name="Daga R.R."/>
            <person name="Cruzado L."/>
            <person name="Jimenez J."/>
            <person name="Sanchez M."/>
            <person name="del Rey F."/>
            <person name="Benito J."/>
            <person name="Dominguez A."/>
            <person name="Revuelta J.L."/>
            <person name="Moreno S."/>
            <person name="Armstrong J."/>
            <person name="Forsburg S.L."/>
            <person name="Cerutti L."/>
            <person name="Lowe T."/>
            <person name="McCombie W.R."/>
            <person name="Paulsen I."/>
            <person name="Potashkin J."/>
            <person name="Shpakovski G.V."/>
            <person name="Ussery D."/>
            <person name="Barrell B.G."/>
            <person name="Nurse P."/>
        </authorList>
    </citation>
    <scope>NUCLEOTIDE SEQUENCE [LARGE SCALE GENOMIC DNA]</scope>
    <source>
        <strain>972 / ATCC 24843</strain>
    </source>
</reference>
<evidence type="ECO:0000250" key="1">
    <source>
        <dbReference type="UniProtKB" id="Q8BH86"/>
    </source>
</evidence>
<evidence type="ECO:0000305" key="2"/>
<organism>
    <name type="scientific">Schizosaccharomyces pombe (strain 972 / ATCC 24843)</name>
    <name type="common">Fission yeast</name>
    <dbReference type="NCBI Taxonomy" id="284812"/>
    <lineage>
        <taxon>Eukaryota</taxon>
        <taxon>Fungi</taxon>
        <taxon>Dikarya</taxon>
        <taxon>Ascomycota</taxon>
        <taxon>Taphrinomycotina</taxon>
        <taxon>Schizosaccharomycetes</taxon>
        <taxon>Schizosaccharomycetales</taxon>
        <taxon>Schizosaccharomycetaceae</taxon>
        <taxon>Schizosaccharomyces</taxon>
    </lineage>
</organism>
<feature type="chain" id="PRO_0000217174" description="Putative hydro-lyase C5H10.01">
    <location>
        <begin position="1"/>
        <end position="301"/>
    </location>
</feature>
<sequence>MTTTSIDPPVYATVDVIREPKAYDGMPKKDECRLPSYSERAITKPVEARKLIRNRLMTKSTTGWCEGYIQANLLVLPAKYRDDFVNLCVRNPVPCPLLGETEIGKPTEFKPEALAKQSNVATDIPFYCEYINGKFSRELENISKEWTEDYVGFLIGCSFSFEAALVAENFIPRHLPTGDAPPMFITNIPLCASGVFTGTFVVSMRPYPEKDLERIRKITSAYTNCHGEPVAWGWDGAKKIGVKDCGKPDFGVPVEFKEGEIPIFWGCGVTPQNVVMMSKLPEPVYSHKPGYMYLTDLTHNC</sequence>
<keyword id="KW-0456">Lyase</keyword>
<keyword id="KW-1185">Reference proteome</keyword>